<feature type="chain" id="PRO_1000012885" description="Lysine--tRNA ligase">
    <location>
        <begin position="1"/>
        <end position="496"/>
    </location>
</feature>
<feature type="binding site" evidence="1">
    <location>
        <position position="408"/>
    </location>
    <ligand>
        <name>Mg(2+)</name>
        <dbReference type="ChEBI" id="CHEBI:18420"/>
        <label>1</label>
    </ligand>
</feature>
<feature type="binding site" evidence="1">
    <location>
        <position position="415"/>
    </location>
    <ligand>
        <name>Mg(2+)</name>
        <dbReference type="ChEBI" id="CHEBI:18420"/>
        <label>1</label>
    </ligand>
</feature>
<feature type="binding site" evidence="1">
    <location>
        <position position="415"/>
    </location>
    <ligand>
        <name>Mg(2+)</name>
        <dbReference type="ChEBI" id="CHEBI:18420"/>
        <label>2</label>
    </ligand>
</feature>
<sequence>MSEEHVHLDESEVYHIRKQKLAELRTSGFNFPNTFRREHLADALLKQYSETEKQTLEQKHVKVSVAGRIVLRRIMGKASFFHIQDVSGRIQVYLRSNDLPDVYEQFKHWDLGDIVGVQGELFKTNTGELTINAEHVELLTKSLRPLPDKFHGLADQELKYRKRYVDLIANEDSRKTFLIRSHLIKAFREFMDDNHFLEVETPMMHPIPGGALARPFVTHHNTLDMTMYLRIAPELYLKRLVVGGFERVYEINRNFRNEGISTRHNPEFTMLEFYQAYADYNDLMNFTEQLFHYLCDKVLATRQIEYQGQVIDFNKPFERLSVKEAILKYHPDIKAQQLETVEGCRTLLNDLDLPYKETDGLGKLQIILFEETVEHQLFQPTFITEYPTEISPLARRSDTNPEVTDRFEFFIAGREIANGFSELNDAEDQAERFRKQVEEKDAGDLEAMHFDSDYIEALEYGLPPTAGEGIGIDRLVMLFTNSQSIRDVILFPHLRQ</sequence>
<proteinExistence type="inferred from homology"/>
<reference key="1">
    <citation type="journal article" date="2004" name="Nat. Genet.">
        <title>Evidence in the Legionella pneumophila genome for exploitation of host cell functions and high genome plasticity.</title>
        <authorList>
            <person name="Cazalet C."/>
            <person name="Rusniok C."/>
            <person name="Brueggemann H."/>
            <person name="Zidane N."/>
            <person name="Magnier A."/>
            <person name="Ma L."/>
            <person name="Tichit M."/>
            <person name="Jarraud S."/>
            <person name="Bouchier C."/>
            <person name="Vandenesch F."/>
            <person name="Kunst F."/>
            <person name="Etienne J."/>
            <person name="Glaser P."/>
            <person name="Buchrieser C."/>
        </authorList>
    </citation>
    <scope>NUCLEOTIDE SEQUENCE [LARGE SCALE GENOMIC DNA]</scope>
    <source>
        <strain>Lens</strain>
    </source>
</reference>
<organism>
    <name type="scientific">Legionella pneumophila (strain Lens)</name>
    <dbReference type="NCBI Taxonomy" id="297245"/>
    <lineage>
        <taxon>Bacteria</taxon>
        <taxon>Pseudomonadati</taxon>
        <taxon>Pseudomonadota</taxon>
        <taxon>Gammaproteobacteria</taxon>
        <taxon>Legionellales</taxon>
        <taxon>Legionellaceae</taxon>
        <taxon>Legionella</taxon>
    </lineage>
</organism>
<gene>
    <name evidence="1" type="primary">lysS</name>
    <name type="ordered locus">lpl1741</name>
</gene>
<keyword id="KW-0030">Aminoacyl-tRNA synthetase</keyword>
<keyword id="KW-0067">ATP-binding</keyword>
<keyword id="KW-0963">Cytoplasm</keyword>
<keyword id="KW-0436">Ligase</keyword>
<keyword id="KW-0460">Magnesium</keyword>
<keyword id="KW-0479">Metal-binding</keyword>
<keyword id="KW-0547">Nucleotide-binding</keyword>
<keyword id="KW-0648">Protein biosynthesis</keyword>
<name>SYK_LEGPL</name>
<evidence type="ECO:0000255" key="1">
    <source>
        <dbReference type="HAMAP-Rule" id="MF_00252"/>
    </source>
</evidence>
<dbReference type="EC" id="6.1.1.6" evidence="1"/>
<dbReference type="EMBL" id="CR628337">
    <property type="protein sequence ID" value="CAH15980.1"/>
    <property type="molecule type" value="Genomic_DNA"/>
</dbReference>
<dbReference type="RefSeq" id="WP_011215752.1">
    <property type="nucleotide sequence ID" value="NC_006369.1"/>
</dbReference>
<dbReference type="SMR" id="Q5WVS0"/>
<dbReference type="KEGG" id="lpf:lpl1741"/>
<dbReference type="LegioList" id="lpl1741"/>
<dbReference type="HOGENOM" id="CLU_008255_6_0_6"/>
<dbReference type="Proteomes" id="UP000002517">
    <property type="component" value="Chromosome"/>
</dbReference>
<dbReference type="GO" id="GO:0005829">
    <property type="term" value="C:cytosol"/>
    <property type="evidence" value="ECO:0007669"/>
    <property type="project" value="TreeGrafter"/>
</dbReference>
<dbReference type="GO" id="GO:0005524">
    <property type="term" value="F:ATP binding"/>
    <property type="evidence" value="ECO:0007669"/>
    <property type="project" value="UniProtKB-UniRule"/>
</dbReference>
<dbReference type="GO" id="GO:0004824">
    <property type="term" value="F:lysine-tRNA ligase activity"/>
    <property type="evidence" value="ECO:0007669"/>
    <property type="project" value="UniProtKB-UniRule"/>
</dbReference>
<dbReference type="GO" id="GO:0000287">
    <property type="term" value="F:magnesium ion binding"/>
    <property type="evidence" value="ECO:0007669"/>
    <property type="project" value="UniProtKB-UniRule"/>
</dbReference>
<dbReference type="GO" id="GO:0000049">
    <property type="term" value="F:tRNA binding"/>
    <property type="evidence" value="ECO:0007669"/>
    <property type="project" value="TreeGrafter"/>
</dbReference>
<dbReference type="GO" id="GO:0006430">
    <property type="term" value="P:lysyl-tRNA aminoacylation"/>
    <property type="evidence" value="ECO:0007669"/>
    <property type="project" value="UniProtKB-UniRule"/>
</dbReference>
<dbReference type="CDD" id="cd00775">
    <property type="entry name" value="LysRS_core"/>
    <property type="match status" value="1"/>
</dbReference>
<dbReference type="CDD" id="cd04322">
    <property type="entry name" value="LysRS_N"/>
    <property type="match status" value="1"/>
</dbReference>
<dbReference type="FunFam" id="2.40.50.140:FF:000024">
    <property type="entry name" value="Lysine--tRNA ligase"/>
    <property type="match status" value="1"/>
</dbReference>
<dbReference type="FunFam" id="3.30.930.10:FF:000001">
    <property type="entry name" value="Lysine--tRNA ligase"/>
    <property type="match status" value="1"/>
</dbReference>
<dbReference type="Gene3D" id="3.30.930.10">
    <property type="entry name" value="Bira Bifunctional Protein, Domain 2"/>
    <property type="match status" value="1"/>
</dbReference>
<dbReference type="Gene3D" id="2.40.50.140">
    <property type="entry name" value="Nucleic acid-binding proteins"/>
    <property type="match status" value="1"/>
</dbReference>
<dbReference type="HAMAP" id="MF_00252">
    <property type="entry name" value="Lys_tRNA_synth_class2"/>
    <property type="match status" value="1"/>
</dbReference>
<dbReference type="InterPro" id="IPR004364">
    <property type="entry name" value="Aa-tRNA-synt_II"/>
</dbReference>
<dbReference type="InterPro" id="IPR006195">
    <property type="entry name" value="aa-tRNA-synth_II"/>
</dbReference>
<dbReference type="InterPro" id="IPR045864">
    <property type="entry name" value="aa-tRNA-synth_II/BPL/LPL"/>
</dbReference>
<dbReference type="InterPro" id="IPR002313">
    <property type="entry name" value="Lys-tRNA-ligase_II"/>
</dbReference>
<dbReference type="InterPro" id="IPR044136">
    <property type="entry name" value="Lys-tRNA-ligase_II_N"/>
</dbReference>
<dbReference type="InterPro" id="IPR018149">
    <property type="entry name" value="Lys-tRNA-synth_II_C"/>
</dbReference>
<dbReference type="InterPro" id="IPR012340">
    <property type="entry name" value="NA-bd_OB-fold"/>
</dbReference>
<dbReference type="InterPro" id="IPR004365">
    <property type="entry name" value="NA-bd_OB_tRNA"/>
</dbReference>
<dbReference type="NCBIfam" id="TIGR00499">
    <property type="entry name" value="lysS_bact"/>
    <property type="match status" value="1"/>
</dbReference>
<dbReference type="NCBIfam" id="NF001756">
    <property type="entry name" value="PRK00484.1"/>
    <property type="match status" value="1"/>
</dbReference>
<dbReference type="PANTHER" id="PTHR42918:SF15">
    <property type="entry name" value="LYSINE--TRNA LIGASE, CHLOROPLASTIC_MITOCHONDRIAL"/>
    <property type="match status" value="1"/>
</dbReference>
<dbReference type="PANTHER" id="PTHR42918">
    <property type="entry name" value="LYSYL-TRNA SYNTHETASE"/>
    <property type="match status" value="1"/>
</dbReference>
<dbReference type="Pfam" id="PF00152">
    <property type="entry name" value="tRNA-synt_2"/>
    <property type="match status" value="1"/>
</dbReference>
<dbReference type="Pfam" id="PF01336">
    <property type="entry name" value="tRNA_anti-codon"/>
    <property type="match status" value="1"/>
</dbReference>
<dbReference type="PRINTS" id="PR00982">
    <property type="entry name" value="TRNASYNTHLYS"/>
</dbReference>
<dbReference type="SUPFAM" id="SSF55681">
    <property type="entry name" value="Class II aaRS and biotin synthetases"/>
    <property type="match status" value="1"/>
</dbReference>
<dbReference type="SUPFAM" id="SSF50249">
    <property type="entry name" value="Nucleic acid-binding proteins"/>
    <property type="match status" value="1"/>
</dbReference>
<dbReference type="PROSITE" id="PS50862">
    <property type="entry name" value="AA_TRNA_LIGASE_II"/>
    <property type="match status" value="1"/>
</dbReference>
<protein>
    <recommendedName>
        <fullName evidence="1">Lysine--tRNA ligase</fullName>
        <ecNumber evidence="1">6.1.1.6</ecNumber>
    </recommendedName>
    <alternativeName>
        <fullName evidence="1">Lysyl-tRNA synthetase</fullName>
        <shortName evidence="1">LysRS</shortName>
    </alternativeName>
</protein>
<accession>Q5WVS0</accession>
<comment type="catalytic activity">
    <reaction evidence="1">
        <text>tRNA(Lys) + L-lysine + ATP = L-lysyl-tRNA(Lys) + AMP + diphosphate</text>
        <dbReference type="Rhea" id="RHEA:20792"/>
        <dbReference type="Rhea" id="RHEA-COMP:9696"/>
        <dbReference type="Rhea" id="RHEA-COMP:9697"/>
        <dbReference type="ChEBI" id="CHEBI:30616"/>
        <dbReference type="ChEBI" id="CHEBI:32551"/>
        <dbReference type="ChEBI" id="CHEBI:33019"/>
        <dbReference type="ChEBI" id="CHEBI:78442"/>
        <dbReference type="ChEBI" id="CHEBI:78529"/>
        <dbReference type="ChEBI" id="CHEBI:456215"/>
        <dbReference type="EC" id="6.1.1.6"/>
    </reaction>
</comment>
<comment type="cofactor">
    <cofactor evidence="1">
        <name>Mg(2+)</name>
        <dbReference type="ChEBI" id="CHEBI:18420"/>
    </cofactor>
    <text evidence="1">Binds 3 Mg(2+) ions per subunit.</text>
</comment>
<comment type="subunit">
    <text evidence="1">Homodimer.</text>
</comment>
<comment type="subcellular location">
    <subcellularLocation>
        <location evidence="1">Cytoplasm</location>
    </subcellularLocation>
</comment>
<comment type="similarity">
    <text evidence="1">Belongs to the class-II aminoacyl-tRNA synthetase family.</text>
</comment>